<reference key="1">
    <citation type="journal article" date="2001" name="J. Bacteriol.">
        <title>Isogenic strain construction and gene targeting in Candida dubliniensis.</title>
        <authorList>
            <person name="Staib P."/>
            <person name="Moran G.P."/>
            <person name="Sullivan D.J."/>
            <person name="Coleman D.C."/>
            <person name="Morschhauser J."/>
        </authorList>
    </citation>
    <scope>NUCLEOTIDE SEQUENCE [GENOMIC DNA]</scope>
</reference>
<reference key="2">
    <citation type="journal article" date="2009" name="Genome Res.">
        <title>Comparative genomics of the fungal pathogens Candida dubliniensis and Candida albicans.</title>
        <authorList>
            <person name="Jackson A.P."/>
            <person name="Gamble J.A."/>
            <person name="Yeomans T."/>
            <person name="Moran G.P."/>
            <person name="Saunders D."/>
            <person name="Harris D."/>
            <person name="Aslett M."/>
            <person name="Barrell J.F."/>
            <person name="Butler G."/>
            <person name="Citiulo F."/>
            <person name="Coleman D.C."/>
            <person name="de Groot P.W.J."/>
            <person name="Goodwin T.J."/>
            <person name="Quail M.A."/>
            <person name="McQuillan J."/>
            <person name="Munro C.A."/>
            <person name="Pain A."/>
            <person name="Poulter R.T."/>
            <person name="Rajandream M.A."/>
            <person name="Renauld H."/>
            <person name="Spiering M.J."/>
            <person name="Tivey A."/>
            <person name="Gow N.A.R."/>
            <person name="Barrell B."/>
            <person name="Sullivan D.J."/>
            <person name="Berriman M."/>
        </authorList>
    </citation>
    <scope>NUCLEOTIDE SEQUENCE [LARGE SCALE GENOMIC DNA]</scope>
    <source>
        <strain>CD36 / ATCC MYA-646 / CBS 7987 / NCPF 3949 / NRRL Y-17841</strain>
    </source>
</reference>
<comment type="catalytic activity">
    <reaction evidence="2">
        <text>orotidine 5'-phosphate + H(+) = UMP + CO2</text>
        <dbReference type="Rhea" id="RHEA:11596"/>
        <dbReference type="ChEBI" id="CHEBI:15378"/>
        <dbReference type="ChEBI" id="CHEBI:16526"/>
        <dbReference type="ChEBI" id="CHEBI:57538"/>
        <dbReference type="ChEBI" id="CHEBI:57865"/>
        <dbReference type="EC" id="4.1.1.23"/>
    </reaction>
</comment>
<comment type="pathway">
    <text>Pyrimidine metabolism; UMP biosynthesis via de novo pathway; UMP from orotate: step 2/2.</text>
</comment>
<comment type="similarity">
    <text evidence="3">Belongs to the OMP decarboxylase family.</text>
</comment>
<evidence type="ECO:0000250" key="1"/>
<evidence type="ECO:0000255" key="2">
    <source>
        <dbReference type="PROSITE-ProRule" id="PRU10110"/>
    </source>
</evidence>
<evidence type="ECO:0000305" key="3"/>
<sequence length="270" mass="29921">MTVNTKTYSARAETHASPVAQRLFRLMESKKTNLCASIDVDTTKEFLELIDKLGPYVCLIKTHIDIINDFSYESTIEPLLELSRKHQFMIFEDRKFADIGNTVKKQYIGGVYKISSWADITNAHGVTGNGVVEGLKQGAKETTTDQEPRGLLMLAELSSVGSLAYGEYSQKTVEIAKSDKEFVIGFIAQRDMGGQEEGFDWIIMTPGVGLDDKGDGLGQQYRTVNEVVSTGTDIIIVGRGLFGKGRDPEVEGKRYRDAGWNAYLKKTGQL</sequence>
<organism>
    <name type="scientific">Candida dubliniensis (strain CD36 / ATCC MYA-646 / CBS 7987 / NCPF 3949 / NRRL Y-17841)</name>
    <name type="common">Yeast</name>
    <dbReference type="NCBI Taxonomy" id="573826"/>
    <lineage>
        <taxon>Eukaryota</taxon>
        <taxon>Fungi</taxon>
        <taxon>Dikarya</taxon>
        <taxon>Ascomycota</taxon>
        <taxon>Saccharomycotina</taxon>
        <taxon>Pichiomycetes</taxon>
        <taxon>Debaryomycetaceae</taxon>
        <taxon>Candida/Lodderomyces clade</taxon>
        <taxon>Candida</taxon>
    </lineage>
</organism>
<dbReference type="EC" id="4.1.1.23"/>
<dbReference type="EMBL" id="AJ302032">
    <property type="protein sequence ID" value="CAC27824.1"/>
    <property type="molecule type" value="Genomic_DNA"/>
</dbReference>
<dbReference type="EMBL" id="FM992690">
    <property type="protein sequence ID" value="CAX42658.1"/>
    <property type="molecule type" value="Genomic_DNA"/>
</dbReference>
<dbReference type="RefSeq" id="XP_002419073.1">
    <property type="nucleotide sequence ID" value="XM_002419028.1"/>
</dbReference>
<dbReference type="SMR" id="Q9C150"/>
<dbReference type="GeneID" id="8047017"/>
<dbReference type="KEGG" id="cdu:CD36_81280"/>
<dbReference type="CGD" id="CAL0000163710">
    <property type="gene designation" value="URA3"/>
</dbReference>
<dbReference type="VEuPathDB" id="FungiDB:CD36_81280"/>
<dbReference type="eggNOG" id="KOG1377">
    <property type="taxonomic scope" value="Eukaryota"/>
</dbReference>
<dbReference type="HOGENOM" id="CLU_030821_0_0_1"/>
<dbReference type="OrthoDB" id="10263753at2759"/>
<dbReference type="UniPathway" id="UPA00070">
    <property type="reaction ID" value="UER00120"/>
</dbReference>
<dbReference type="Proteomes" id="UP000002605">
    <property type="component" value="Chromosome 3"/>
</dbReference>
<dbReference type="GO" id="GO:0005829">
    <property type="term" value="C:cytosol"/>
    <property type="evidence" value="ECO:0007669"/>
    <property type="project" value="TreeGrafter"/>
</dbReference>
<dbReference type="GO" id="GO:0004590">
    <property type="term" value="F:orotidine-5'-phosphate decarboxylase activity"/>
    <property type="evidence" value="ECO:0007669"/>
    <property type="project" value="UniProtKB-EC"/>
</dbReference>
<dbReference type="GO" id="GO:0006207">
    <property type="term" value="P:'de novo' pyrimidine nucleobase biosynthetic process"/>
    <property type="evidence" value="ECO:0007669"/>
    <property type="project" value="InterPro"/>
</dbReference>
<dbReference type="GO" id="GO:0044205">
    <property type="term" value="P:'de novo' UMP biosynthetic process"/>
    <property type="evidence" value="ECO:0007669"/>
    <property type="project" value="UniProtKB-UniPathway"/>
</dbReference>
<dbReference type="CDD" id="cd04725">
    <property type="entry name" value="OMP_decarboxylase_like"/>
    <property type="match status" value="1"/>
</dbReference>
<dbReference type="FunFam" id="3.20.20.70:FF:000114">
    <property type="entry name" value="Decarboxylase,orotidine phosphate"/>
    <property type="match status" value="1"/>
</dbReference>
<dbReference type="Gene3D" id="3.20.20.70">
    <property type="entry name" value="Aldolase class I"/>
    <property type="match status" value="1"/>
</dbReference>
<dbReference type="InterPro" id="IPR013785">
    <property type="entry name" value="Aldolase_TIM"/>
</dbReference>
<dbReference type="InterPro" id="IPR014732">
    <property type="entry name" value="OMPdecase"/>
</dbReference>
<dbReference type="InterPro" id="IPR018089">
    <property type="entry name" value="OMPdecase_AS"/>
</dbReference>
<dbReference type="InterPro" id="IPR001754">
    <property type="entry name" value="OMPdeCOase_dom"/>
</dbReference>
<dbReference type="InterPro" id="IPR011060">
    <property type="entry name" value="RibuloseP-bd_barrel"/>
</dbReference>
<dbReference type="NCBIfam" id="TIGR01740">
    <property type="entry name" value="pyrF"/>
    <property type="match status" value="1"/>
</dbReference>
<dbReference type="PANTHER" id="PTHR32119">
    <property type="entry name" value="OROTIDINE 5'-PHOSPHATE DECARBOXYLASE"/>
    <property type="match status" value="1"/>
</dbReference>
<dbReference type="PANTHER" id="PTHR32119:SF2">
    <property type="entry name" value="OROTIDINE 5'-PHOSPHATE DECARBOXYLASE"/>
    <property type="match status" value="1"/>
</dbReference>
<dbReference type="Pfam" id="PF00215">
    <property type="entry name" value="OMPdecase"/>
    <property type="match status" value="1"/>
</dbReference>
<dbReference type="SMART" id="SM00934">
    <property type="entry name" value="OMPdecase"/>
    <property type="match status" value="1"/>
</dbReference>
<dbReference type="SUPFAM" id="SSF51366">
    <property type="entry name" value="Ribulose-phoshate binding barrel"/>
    <property type="match status" value="1"/>
</dbReference>
<dbReference type="PROSITE" id="PS00156">
    <property type="entry name" value="OMPDECASE"/>
    <property type="match status" value="1"/>
</dbReference>
<protein>
    <recommendedName>
        <fullName>Orotidine 5'-phosphate decarboxylase</fullName>
        <ecNumber>4.1.1.23</ecNumber>
    </recommendedName>
    <alternativeName>
        <fullName>OMP decarboxylase</fullName>
        <shortName>OMPDCase</shortName>
        <shortName>OMPdecase</shortName>
    </alternativeName>
    <alternativeName>
        <fullName>Uridine 5'-monophosphate synthase</fullName>
        <shortName>UMP synthase</shortName>
    </alternativeName>
</protein>
<accession>Q9C150</accession>
<accession>B9WDA6</accession>
<feature type="chain" id="PRO_0000134648" description="Orotidine 5'-phosphate decarboxylase">
    <location>
        <begin position="1"/>
        <end position="270"/>
    </location>
</feature>
<feature type="active site" description="Proton donor" evidence="2">
    <location>
        <position position="95"/>
    </location>
</feature>
<feature type="binding site" evidence="1">
    <location>
        <position position="39"/>
    </location>
    <ligand>
        <name>substrate</name>
    </ligand>
</feature>
<feature type="binding site" evidence="1">
    <location>
        <begin position="61"/>
        <end position="63"/>
    </location>
    <ligand>
        <name>substrate</name>
    </ligand>
</feature>
<feature type="binding site" evidence="1">
    <location>
        <begin position="93"/>
        <end position="102"/>
    </location>
    <ligand>
        <name>substrate</name>
    </ligand>
</feature>
<feature type="binding site" evidence="1">
    <location>
        <position position="221"/>
    </location>
    <ligand>
        <name>substrate</name>
    </ligand>
</feature>
<feature type="binding site" evidence="1">
    <location>
        <position position="239"/>
    </location>
    <ligand>
        <name>substrate</name>
    </ligand>
</feature>
<name>PYRF_CANDC</name>
<keyword id="KW-0210">Decarboxylase</keyword>
<keyword id="KW-0456">Lyase</keyword>
<keyword id="KW-0665">Pyrimidine biosynthesis</keyword>
<proteinExistence type="inferred from homology"/>
<gene>
    <name type="primary">URA3</name>
    <name type="ORF">CD36_81280</name>
</gene>